<proteinExistence type="inferred from homology"/>
<accession>A6VA05</accession>
<name>RUVB_PSEP7</name>
<feature type="chain" id="PRO_1000001446" description="Holliday junction branch migration complex subunit RuvB">
    <location>
        <begin position="1"/>
        <end position="352"/>
    </location>
</feature>
<feature type="region of interest" description="Large ATPase domain (RuvB-L)" evidence="1">
    <location>
        <begin position="4"/>
        <end position="185"/>
    </location>
</feature>
<feature type="region of interest" description="Small ATPAse domain (RuvB-S)" evidence="1">
    <location>
        <begin position="186"/>
        <end position="256"/>
    </location>
</feature>
<feature type="region of interest" description="Head domain (RuvB-H)" evidence="1">
    <location>
        <begin position="259"/>
        <end position="352"/>
    </location>
</feature>
<feature type="binding site" evidence="1">
    <location>
        <position position="24"/>
    </location>
    <ligand>
        <name>ATP</name>
        <dbReference type="ChEBI" id="CHEBI:30616"/>
    </ligand>
</feature>
<feature type="binding site" evidence="1">
    <location>
        <position position="25"/>
    </location>
    <ligand>
        <name>ATP</name>
        <dbReference type="ChEBI" id="CHEBI:30616"/>
    </ligand>
</feature>
<feature type="binding site" evidence="1">
    <location>
        <position position="66"/>
    </location>
    <ligand>
        <name>ATP</name>
        <dbReference type="ChEBI" id="CHEBI:30616"/>
    </ligand>
</feature>
<feature type="binding site" evidence="1">
    <location>
        <position position="69"/>
    </location>
    <ligand>
        <name>ATP</name>
        <dbReference type="ChEBI" id="CHEBI:30616"/>
    </ligand>
</feature>
<feature type="binding site" evidence="1">
    <location>
        <position position="70"/>
    </location>
    <ligand>
        <name>ATP</name>
        <dbReference type="ChEBI" id="CHEBI:30616"/>
    </ligand>
</feature>
<feature type="binding site" evidence="1">
    <location>
        <position position="70"/>
    </location>
    <ligand>
        <name>Mg(2+)</name>
        <dbReference type="ChEBI" id="CHEBI:18420"/>
    </ligand>
</feature>
<feature type="binding site" evidence="1">
    <location>
        <position position="71"/>
    </location>
    <ligand>
        <name>ATP</name>
        <dbReference type="ChEBI" id="CHEBI:30616"/>
    </ligand>
</feature>
<feature type="binding site" evidence="1">
    <location>
        <begin position="132"/>
        <end position="134"/>
    </location>
    <ligand>
        <name>ATP</name>
        <dbReference type="ChEBI" id="CHEBI:30616"/>
    </ligand>
</feature>
<feature type="binding site" evidence="1">
    <location>
        <position position="175"/>
    </location>
    <ligand>
        <name>ATP</name>
        <dbReference type="ChEBI" id="CHEBI:30616"/>
    </ligand>
</feature>
<feature type="binding site" evidence="1">
    <location>
        <position position="185"/>
    </location>
    <ligand>
        <name>ATP</name>
        <dbReference type="ChEBI" id="CHEBI:30616"/>
    </ligand>
</feature>
<feature type="binding site" evidence="1">
    <location>
        <position position="222"/>
    </location>
    <ligand>
        <name>ATP</name>
        <dbReference type="ChEBI" id="CHEBI:30616"/>
    </ligand>
</feature>
<feature type="binding site" evidence="1">
    <location>
        <position position="295"/>
    </location>
    <ligand>
        <name>DNA</name>
        <dbReference type="ChEBI" id="CHEBI:16991"/>
    </ligand>
</feature>
<feature type="binding site" evidence="1">
    <location>
        <position position="314"/>
    </location>
    <ligand>
        <name>DNA</name>
        <dbReference type="ChEBI" id="CHEBI:16991"/>
    </ligand>
</feature>
<feature type="binding site" evidence="1">
    <location>
        <position position="319"/>
    </location>
    <ligand>
        <name>DNA</name>
        <dbReference type="ChEBI" id="CHEBI:16991"/>
    </ligand>
</feature>
<organism>
    <name type="scientific">Pseudomonas paraeruginosa (strain DSM 24068 / PA7)</name>
    <name type="common">Pseudomonas aeruginosa (strain PA7)</name>
    <dbReference type="NCBI Taxonomy" id="381754"/>
    <lineage>
        <taxon>Bacteria</taxon>
        <taxon>Pseudomonadati</taxon>
        <taxon>Pseudomonadota</taxon>
        <taxon>Gammaproteobacteria</taxon>
        <taxon>Pseudomonadales</taxon>
        <taxon>Pseudomonadaceae</taxon>
        <taxon>Pseudomonas</taxon>
        <taxon>Pseudomonas paraeruginosa</taxon>
    </lineage>
</organism>
<gene>
    <name evidence="1" type="primary">ruvB</name>
    <name type="ordered locus">PSPA7_4541</name>
</gene>
<evidence type="ECO:0000255" key="1">
    <source>
        <dbReference type="HAMAP-Rule" id="MF_00016"/>
    </source>
</evidence>
<keyword id="KW-0067">ATP-binding</keyword>
<keyword id="KW-0963">Cytoplasm</keyword>
<keyword id="KW-0227">DNA damage</keyword>
<keyword id="KW-0233">DNA recombination</keyword>
<keyword id="KW-0234">DNA repair</keyword>
<keyword id="KW-0238">DNA-binding</keyword>
<keyword id="KW-0378">Hydrolase</keyword>
<keyword id="KW-0547">Nucleotide-binding</keyword>
<sequence length="352" mass="38936">MIEPDRLISAVSGREREEQLDRAIRPLKLADYIGQPSVREQMELFIHAARGRQEALDHTLIFGPPGLGKTTLANIIAQEMGVSIKSTSGPVLERPGDLAALLTNLEAGDVLFVDEIHRLSPIVEEVLYPAMEDFQLDIMIGEGPAARSIKLDLPPFTLVGATTRAGMLTNPLRDRFGIVQRLEFYNVEDLATIVSRSAGILGLQIETQGAAEIAKRARGTPRIANRLLRRVRDFAEVRGQGDITRVIADKALNLLDVDERGFDHLDRRLLLTMIDKFDGGPVGIDNLAAALSEERHTIEDVLEPYLIQQGYIMRTPRGRVVTRHAYLHFGLNIPKRLGPGVTSDLFTSEDGN</sequence>
<comment type="function">
    <text evidence="1">The RuvA-RuvB-RuvC complex processes Holliday junction (HJ) DNA during genetic recombination and DNA repair, while the RuvA-RuvB complex plays an important role in the rescue of blocked DNA replication forks via replication fork reversal (RFR). RuvA specifically binds to HJ cruciform DNA, conferring on it an open structure. The RuvB hexamer acts as an ATP-dependent pump, pulling dsDNA into and through the RuvAB complex. RuvB forms 2 homohexamers on either side of HJ DNA bound by 1 or 2 RuvA tetramers; 4 subunits per hexamer contact DNA at a time. Coordinated motions by a converter formed by DNA-disengaged RuvB subunits stimulates ATP hydrolysis and nucleotide exchange. Immobilization of the converter enables RuvB to convert the ATP-contained energy into a lever motion, pulling 2 nucleotides of DNA out of the RuvA tetramer per ATP hydrolyzed, thus driving DNA branch migration. The RuvB motors rotate together with the DNA substrate, which together with the progressing nucleotide cycle form the mechanistic basis for DNA recombination by continuous HJ branch migration. Branch migration allows RuvC to scan DNA until it finds its consensus sequence, where it cleaves and resolves cruciform DNA.</text>
</comment>
<comment type="catalytic activity">
    <reaction evidence="1">
        <text>ATP + H2O = ADP + phosphate + H(+)</text>
        <dbReference type="Rhea" id="RHEA:13065"/>
        <dbReference type="ChEBI" id="CHEBI:15377"/>
        <dbReference type="ChEBI" id="CHEBI:15378"/>
        <dbReference type="ChEBI" id="CHEBI:30616"/>
        <dbReference type="ChEBI" id="CHEBI:43474"/>
        <dbReference type="ChEBI" id="CHEBI:456216"/>
    </reaction>
</comment>
<comment type="subunit">
    <text evidence="1">Homohexamer. Forms an RuvA(8)-RuvB(12)-Holliday junction (HJ) complex. HJ DNA is sandwiched between 2 RuvA tetramers; dsDNA enters through RuvA and exits via RuvB. An RuvB hexamer assembles on each DNA strand where it exits the tetramer. Each RuvB hexamer is contacted by two RuvA subunits (via domain III) on 2 adjacent RuvB subunits; this complex drives branch migration. In the full resolvosome a probable DNA-RuvA(4)-RuvB(12)-RuvC(2) complex forms which resolves the HJ.</text>
</comment>
<comment type="subcellular location">
    <subcellularLocation>
        <location evidence="1">Cytoplasm</location>
    </subcellularLocation>
</comment>
<comment type="domain">
    <text evidence="1">Has 3 domains, the large (RuvB-L) and small ATPase (RuvB-S) domains and the C-terminal head (RuvB-H) domain. The head domain binds DNA, while the ATPase domains jointly bind ATP, ADP or are empty depending on the state of the subunit in the translocation cycle. During a single DNA translocation step the structure of each domain remains the same, but their relative positions change.</text>
</comment>
<comment type="similarity">
    <text evidence="1">Belongs to the RuvB family.</text>
</comment>
<dbReference type="EC" id="3.6.4.-" evidence="1"/>
<dbReference type="EMBL" id="CP000744">
    <property type="protein sequence ID" value="ABR85653.1"/>
    <property type="molecule type" value="Genomic_DNA"/>
</dbReference>
<dbReference type="RefSeq" id="WP_012076893.1">
    <property type="nucleotide sequence ID" value="NC_009656.1"/>
</dbReference>
<dbReference type="SMR" id="A6VA05"/>
<dbReference type="GeneID" id="77222450"/>
<dbReference type="KEGG" id="pap:PSPA7_4541"/>
<dbReference type="HOGENOM" id="CLU_055599_1_0_6"/>
<dbReference type="Proteomes" id="UP000001582">
    <property type="component" value="Chromosome"/>
</dbReference>
<dbReference type="GO" id="GO:0005737">
    <property type="term" value="C:cytoplasm"/>
    <property type="evidence" value="ECO:0007669"/>
    <property type="project" value="UniProtKB-SubCell"/>
</dbReference>
<dbReference type="GO" id="GO:0048476">
    <property type="term" value="C:Holliday junction resolvase complex"/>
    <property type="evidence" value="ECO:0007669"/>
    <property type="project" value="UniProtKB-UniRule"/>
</dbReference>
<dbReference type="GO" id="GO:0005524">
    <property type="term" value="F:ATP binding"/>
    <property type="evidence" value="ECO:0007669"/>
    <property type="project" value="UniProtKB-UniRule"/>
</dbReference>
<dbReference type="GO" id="GO:0016887">
    <property type="term" value="F:ATP hydrolysis activity"/>
    <property type="evidence" value="ECO:0007669"/>
    <property type="project" value="InterPro"/>
</dbReference>
<dbReference type="GO" id="GO:0000400">
    <property type="term" value="F:four-way junction DNA binding"/>
    <property type="evidence" value="ECO:0007669"/>
    <property type="project" value="UniProtKB-UniRule"/>
</dbReference>
<dbReference type="GO" id="GO:0009378">
    <property type="term" value="F:four-way junction helicase activity"/>
    <property type="evidence" value="ECO:0007669"/>
    <property type="project" value="InterPro"/>
</dbReference>
<dbReference type="GO" id="GO:0006310">
    <property type="term" value="P:DNA recombination"/>
    <property type="evidence" value="ECO:0007669"/>
    <property type="project" value="UniProtKB-UniRule"/>
</dbReference>
<dbReference type="GO" id="GO:0006281">
    <property type="term" value="P:DNA repair"/>
    <property type="evidence" value="ECO:0007669"/>
    <property type="project" value="UniProtKB-UniRule"/>
</dbReference>
<dbReference type="CDD" id="cd00009">
    <property type="entry name" value="AAA"/>
    <property type="match status" value="1"/>
</dbReference>
<dbReference type="FunFam" id="1.10.10.10:FF:000086">
    <property type="entry name" value="Holliday junction ATP-dependent DNA helicase RuvB"/>
    <property type="match status" value="1"/>
</dbReference>
<dbReference type="FunFam" id="1.10.8.60:FF:000023">
    <property type="entry name" value="Holliday junction ATP-dependent DNA helicase RuvB"/>
    <property type="match status" value="1"/>
</dbReference>
<dbReference type="FunFam" id="3.40.50.300:FF:000073">
    <property type="entry name" value="Holliday junction ATP-dependent DNA helicase RuvB"/>
    <property type="match status" value="1"/>
</dbReference>
<dbReference type="Gene3D" id="1.10.8.60">
    <property type="match status" value="1"/>
</dbReference>
<dbReference type="Gene3D" id="3.40.50.300">
    <property type="entry name" value="P-loop containing nucleotide triphosphate hydrolases"/>
    <property type="match status" value="1"/>
</dbReference>
<dbReference type="Gene3D" id="1.10.10.10">
    <property type="entry name" value="Winged helix-like DNA-binding domain superfamily/Winged helix DNA-binding domain"/>
    <property type="match status" value="1"/>
</dbReference>
<dbReference type="HAMAP" id="MF_00016">
    <property type="entry name" value="DNA_HJ_migration_RuvB"/>
    <property type="match status" value="1"/>
</dbReference>
<dbReference type="InterPro" id="IPR003593">
    <property type="entry name" value="AAA+_ATPase"/>
</dbReference>
<dbReference type="InterPro" id="IPR041445">
    <property type="entry name" value="AAA_lid_4"/>
</dbReference>
<dbReference type="InterPro" id="IPR004605">
    <property type="entry name" value="DNA_helicase_Holl-junc_RuvB"/>
</dbReference>
<dbReference type="InterPro" id="IPR027417">
    <property type="entry name" value="P-loop_NTPase"/>
</dbReference>
<dbReference type="InterPro" id="IPR008824">
    <property type="entry name" value="RuvB-like_N"/>
</dbReference>
<dbReference type="InterPro" id="IPR008823">
    <property type="entry name" value="RuvB_C"/>
</dbReference>
<dbReference type="InterPro" id="IPR036388">
    <property type="entry name" value="WH-like_DNA-bd_sf"/>
</dbReference>
<dbReference type="InterPro" id="IPR036390">
    <property type="entry name" value="WH_DNA-bd_sf"/>
</dbReference>
<dbReference type="NCBIfam" id="NF000868">
    <property type="entry name" value="PRK00080.1"/>
    <property type="match status" value="1"/>
</dbReference>
<dbReference type="NCBIfam" id="TIGR00635">
    <property type="entry name" value="ruvB"/>
    <property type="match status" value="1"/>
</dbReference>
<dbReference type="PANTHER" id="PTHR42848">
    <property type="match status" value="1"/>
</dbReference>
<dbReference type="PANTHER" id="PTHR42848:SF1">
    <property type="entry name" value="HOLLIDAY JUNCTION BRANCH MIGRATION COMPLEX SUBUNIT RUVB"/>
    <property type="match status" value="1"/>
</dbReference>
<dbReference type="Pfam" id="PF17864">
    <property type="entry name" value="AAA_lid_4"/>
    <property type="match status" value="1"/>
</dbReference>
<dbReference type="Pfam" id="PF05491">
    <property type="entry name" value="RuvB_C"/>
    <property type="match status" value="1"/>
</dbReference>
<dbReference type="Pfam" id="PF05496">
    <property type="entry name" value="RuvB_N"/>
    <property type="match status" value="1"/>
</dbReference>
<dbReference type="SMART" id="SM00382">
    <property type="entry name" value="AAA"/>
    <property type="match status" value="1"/>
</dbReference>
<dbReference type="SUPFAM" id="SSF52540">
    <property type="entry name" value="P-loop containing nucleoside triphosphate hydrolases"/>
    <property type="match status" value="1"/>
</dbReference>
<dbReference type="SUPFAM" id="SSF46785">
    <property type="entry name" value="Winged helix' DNA-binding domain"/>
    <property type="match status" value="1"/>
</dbReference>
<reference key="1">
    <citation type="submission" date="2007-06" db="EMBL/GenBank/DDBJ databases">
        <authorList>
            <person name="Dodson R.J."/>
            <person name="Harkins D."/>
            <person name="Paulsen I.T."/>
        </authorList>
    </citation>
    <scope>NUCLEOTIDE SEQUENCE [LARGE SCALE GENOMIC DNA]</scope>
    <source>
        <strain>DSM 24068 / PA7</strain>
    </source>
</reference>
<protein>
    <recommendedName>
        <fullName evidence="1">Holliday junction branch migration complex subunit RuvB</fullName>
        <ecNumber evidence="1">3.6.4.-</ecNumber>
    </recommendedName>
</protein>